<gene>
    <name evidence="11" type="primary">aasA</name>
    <name evidence="10" type="synonym">AA13</name>
    <name type="ORF">ANIA_05463</name>
</gene>
<organism>
    <name type="scientific">Emericella nidulans (strain FGSC A4 / ATCC 38163 / CBS 112.46 / NRRL 194 / M139)</name>
    <name type="common">Aspergillus nidulans</name>
    <dbReference type="NCBI Taxonomy" id="227321"/>
    <lineage>
        <taxon>Eukaryota</taxon>
        <taxon>Fungi</taxon>
        <taxon>Dikarya</taxon>
        <taxon>Ascomycota</taxon>
        <taxon>Pezizomycotina</taxon>
        <taxon>Eurotiomycetes</taxon>
        <taxon>Eurotiomycetidae</taxon>
        <taxon>Eurotiales</taxon>
        <taxon>Aspergillaceae</taxon>
        <taxon>Aspergillus</taxon>
        <taxon>Aspergillus subgen. Nidulantes</taxon>
    </lineage>
</organism>
<proteinExistence type="evidence at protein level"/>
<accession>Q5B1W7</accession>
<accession>C8VGF8</accession>
<comment type="function">
    <text evidence="7 8 12">Starch-active polysaccharide monooxygenase that oxidizes the C1 position of starch substrates, but not in cellulose, chitin, polygalacturonan or esterified pectin, nor with Arabidopsis stem cell walls (PubMed:25608804, PubMed:32774456). Catalysis by LPMOs requires the reduction of the active-site copper from Cu(II) to Cu(I) by a reducing agent and H(2)O(2) or O(2) as a cosubstrate (Probable).</text>
</comment>
<comment type="catalytic activity">
    <reaction evidence="7">
        <text>starch + reduced acceptor + O2 = D-glucono-1,5-lactone-terminated malto-oligosaccharides + short-chain malto-oligosaccharides + acceptor + H2O.</text>
        <dbReference type="EC" id="1.14.99.55"/>
    </reaction>
</comment>
<comment type="cofactor">
    <cofactor evidence="2">
        <name>Cu(2+)</name>
        <dbReference type="ChEBI" id="CHEBI:29036"/>
    </cofactor>
    <text evidence="2">Binds 1 copper ion per subunit.</text>
</comment>
<comment type="subcellular location">
    <subcellularLocation>
        <location evidence="7">Secreted</location>
    </subcellularLocation>
</comment>
<comment type="domain">
    <text evidence="13">Modular lytic polysaccharide monooxygenase comprising an N-terminal catalytic module and a C-terminal starch-binding module of carbohydrate binding module family 20 (CBM20).</text>
</comment>
<comment type="PTM">
    <text evidence="9">The catalytically essential N-terminal histidine His-19 is post-translationally modified by methylation to prevent protonation of the histidine side chain, and protect the critical active site of the enzyme from oxidative damage.</text>
</comment>
<comment type="disruption phenotype">
    <text evidence="8">Impairs degradation of resistant potato starch, but has limited impact on less-resistant wheat starch and no impact on processed solubilized starch.</text>
</comment>
<comment type="biotechnology">
    <text evidence="2">Starch-active PMOs provide an expanded perspective on studies of starch metabolism and may have potential in the food and starch-based biofuel industries.</text>
</comment>
<comment type="similarity">
    <text evidence="12">Belongs to the polysaccharide monooxygenase AA13 family.</text>
</comment>
<evidence type="ECO:0000250" key="1">
    <source>
        <dbReference type="UniProtKB" id="Q2U8Y3"/>
    </source>
</evidence>
<evidence type="ECO:0000250" key="2">
    <source>
        <dbReference type="UniProtKB" id="Q7SCE9"/>
    </source>
</evidence>
<evidence type="ECO:0000255" key="3"/>
<evidence type="ECO:0000255" key="4">
    <source>
        <dbReference type="PROSITE-ProRule" id="PRU00498"/>
    </source>
</evidence>
<evidence type="ECO:0000255" key="5">
    <source>
        <dbReference type="PROSITE-ProRule" id="PRU00594"/>
    </source>
</evidence>
<evidence type="ECO:0000256" key="6">
    <source>
        <dbReference type="SAM" id="MobiDB-lite"/>
    </source>
</evidence>
<evidence type="ECO:0000269" key="7">
    <source>
    </source>
</evidence>
<evidence type="ECO:0000269" key="8">
    <source>
    </source>
</evidence>
<evidence type="ECO:0000269" key="9">
    <source>
    </source>
</evidence>
<evidence type="ECO:0000303" key="10">
    <source>
    </source>
</evidence>
<evidence type="ECO:0000303" key="11">
    <source>
    </source>
</evidence>
<evidence type="ECO:0000305" key="12"/>
<evidence type="ECO:0000305" key="13">
    <source>
    </source>
</evidence>
<sequence>MKSLLALVAGNLVTAVSGHGYLTVPASRTRLGFEAGIDTCPECSILEPVSAWPDLTAAQVGRSGPCGYNARVSVDYNQPGDYWGNEPVVSYTAGDVVEVQWCVDHNGDHGGMFTYGICQNQTLVDLFLTPGYLPTNEEKQAAEDCFLEGELSCLHVPGQTCNYNPDCSAGEPCYQNDWFTCNAFQADNNRACQGVDGAALNSCMTTIAGGYTVTKKIKIPDYSSSHTLLRFRWNSFQTAQVYLHCADIAIVGGSGSSPSPTSTTSTATSTTTPSSTSCASAISIPVTFNALVTTTYGENVYLAGSISQLGSWSTSSAVALSASKYSSSSPLWTVTVDLPVGATFEYKYIKKESDGSIVWESGPNRSYTVPTGCSGTTATESGAWR</sequence>
<name>AA13_EMENI</name>
<keyword id="KW-0119">Carbohydrate metabolism</keyword>
<keyword id="KW-0186">Copper</keyword>
<keyword id="KW-1015">Disulfide bond</keyword>
<keyword id="KW-0325">Glycoprotein</keyword>
<keyword id="KW-0479">Metal-binding</keyword>
<keyword id="KW-0488">Methylation</keyword>
<keyword id="KW-0560">Oxidoreductase</keyword>
<keyword id="KW-0624">Polysaccharide degradation</keyword>
<keyword id="KW-1185">Reference proteome</keyword>
<keyword id="KW-0964">Secreted</keyword>
<keyword id="KW-0732">Signal</keyword>
<feature type="signal peptide" evidence="9">
    <location>
        <begin position="1"/>
        <end position="18"/>
    </location>
</feature>
<feature type="chain" id="PRO_5010230432" description="AA13 family lytic polysaccharide monooxygenase aasA" evidence="3">
    <location>
        <begin position="19"/>
        <end position="385"/>
    </location>
</feature>
<feature type="domain" description="CBM20" evidence="5">
    <location>
        <begin position="278"/>
        <end position="385"/>
    </location>
</feature>
<feature type="region of interest" description="N-terminal catalytic module" evidence="13">
    <location>
        <begin position="19"/>
        <end position="248"/>
    </location>
</feature>
<feature type="region of interest" description="Disordered" evidence="6">
    <location>
        <begin position="254"/>
        <end position="276"/>
    </location>
</feature>
<feature type="compositionally biased region" description="Low complexity" evidence="6">
    <location>
        <begin position="256"/>
        <end position="276"/>
    </location>
</feature>
<feature type="binding site" evidence="1">
    <location>
        <position position="19"/>
    </location>
    <ligand>
        <name>Cu(2+)</name>
        <dbReference type="ChEBI" id="CHEBI:29036"/>
        <note>catalytic</note>
    </ligand>
</feature>
<feature type="binding site" evidence="1">
    <location>
        <position position="109"/>
    </location>
    <ligand>
        <name>Cu(2+)</name>
        <dbReference type="ChEBI" id="CHEBI:29036"/>
        <note>catalytic</note>
    </ligand>
</feature>
<feature type="binding site" evidence="1">
    <location>
        <position position="242"/>
    </location>
    <ligand>
        <name>Cu(2+)</name>
        <dbReference type="ChEBI" id="CHEBI:29036"/>
        <note>catalytic</note>
    </ligand>
</feature>
<feature type="modified residue" description="Methylhistidine" evidence="9">
    <location>
        <position position="19"/>
    </location>
</feature>
<feature type="glycosylation site" description="N-linked (GlcNAc...) asparagine" evidence="4">
    <location>
        <position position="120"/>
    </location>
</feature>
<feature type="glycosylation site" description="N-linked (GlcNAc...) asparagine" evidence="4">
    <location>
        <position position="364"/>
    </location>
</feature>
<feature type="disulfide bond" evidence="1">
    <location>
        <begin position="40"/>
        <end position="43"/>
    </location>
</feature>
<feature type="disulfide bond" evidence="1">
    <location>
        <begin position="66"/>
        <end position="245"/>
    </location>
</feature>
<feature type="disulfide bond" evidence="1">
    <location>
        <begin position="102"/>
        <end position="203"/>
    </location>
</feature>
<feature type="disulfide bond" evidence="1">
    <location>
        <begin position="118"/>
        <end position="145"/>
    </location>
</feature>
<feature type="disulfide bond" evidence="1">
    <location>
        <begin position="153"/>
        <end position="161"/>
    </location>
</feature>
<feature type="disulfide bond" evidence="1">
    <location>
        <begin position="167"/>
        <end position="173"/>
    </location>
</feature>
<feature type="disulfide bond" evidence="1">
    <location>
        <begin position="181"/>
        <end position="192"/>
    </location>
</feature>
<reference key="1">
    <citation type="journal article" date="2005" name="Nature">
        <title>Sequencing of Aspergillus nidulans and comparative analysis with A. fumigatus and A. oryzae.</title>
        <authorList>
            <person name="Galagan J.E."/>
            <person name="Calvo S.E."/>
            <person name="Cuomo C."/>
            <person name="Ma L.-J."/>
            <person name="Wortman J.R."/>
            <person name="Batzoglou S."/>
            <person name="Lee S.-I."/>
            <person name="Bastuerkmen M."/>
            <person name="Spevak C.C."/>
            <person name="Clutterbuck J."/>
            <person name="Kapitonov V."/>
            <person name="Jurka J."/>
            <person name="Scazzocchio C."/>
            <person name="Farman M.L."/>
            <person name="Butler J."/>
            <person name="Purcell S."/>
            <person name="Harris S."/>
            <person name="Braus G.H."/>
            <person name="Draht O."/>
            <person name="Busch S."/>
            <person name="D'Enfert C."/>
            <person name="Bouchier C."/>
            <person name="Goldman G.H."/>
            <person name="Bell-Pedersen D."/>
            <person name="Griffiths-Jones S."/>
            <person name="Doonan J.H."/>
            <person name="Yu J."/>
            <person name="Vienken K."/>
            <person name="Pain A."/>
            <person name="Freitag M."/>
            <person name="Selker E.U."/>
            <person name="Archer D.B."/>
            <person name="Penalva M.A."/>
            <person name="Oakley B.R."/>
            <person name="Momany M."/>
            <person name="Tanaka T."/>
            <person name="Kumagai T."/>
            <person name="Asai K."/>
            <person name="Machida M."/>
            <person name="Nierman W.C."/>
            <person name="Denning D.W."/>
            <person name="Caddick M.X."/>
            <person name="Hynes M."/>
            <person name="Paoletti M."/>
            <person name="Fischer R."/>
            <person name="Miller B.L."/>
            <person name="Dyer P.S."/>
            <person name="Sachs M.S."/>
            <person name="Osmani S.A."/>
            <person name="Birren B.W."/>
        </authorList>
    </citation>
    <scope>NUCLEOTIDE SEQUENCE [LARGE SCALE GENOMIC DNA]</scope>
    <source>
        <strain>FGSC A4 / ATCC 38163 / CBS 112.46 / NRRL 194 / M139</strain>
    </source>
</reference>
<reference key="2">
    <citation type="journal article" date="2009" name="Fungal Genet. Biol.">
        <title>The 2008 update of the Aspergillus nidulans genome annotation: a community effort.</title>
        <authorList>
            <person name="Wortman J.R."/>
            <person name="Gilsenan J.M."/>
            <person name="Joardar V."/>
            <person name="Deegan J."/>
            <person name="Clutterbuck J."/>
            <person name="Andersen M.R."/>
            <person name="Archer D."/>
            <person name="Bencina M."/>
            <person name="Braus G."/>
            <person name="Coutinho P."/>
            <person name="von Dohren H."/>
            <person name="Doonan J."/>
            <person name="Driessen A.J."/>
            <person name="Durek P."/>
            <person name="Espeso E."/>
            <person name="Fekete E."/>
            <person name="Flipphi M."/>
            <person name="Estrada C.G."/>
            <person name="Geysens S."/>
            <person name="Goldman G."/>
            <person name="de Groot P.W."/>
            <person name="Hansen K."/>
            <person name="Harris S.D."/>
            <person name="Heinekamp T."/>
            <person name="Helmstaedt K."/>
            <person name="Henrissat B."/>
            <person name="Hofmann G."/>
            <person name="Homan T."/>
            <person name="Horio T."/>
            <person name="Horiuchi H."/>
            <person name="James S."/>
            <person name="Jones M."/>
            <person name="Karaffa L."/>
            <person name="Karanyi Z."/>
            <person name="Kato M."/>
            <person name="Keller N."/>
            <person name="Kelly D.E."/>
            <person name="Kiel J.A."/>
            <person name="Kim J.M."/>
            <person name="van der Klei I.J."/>
            <person name="Klis F.M."/>
            <person name="Kovalchuk A."/>
            <person name="Krasevec N."/>
            <person name="Kubicek C.P."/>
            <person name="Liu B."/>
            <person name="Maccabe A."/>
            <person name="Meyer V."/>
            <person name="Mirabito P."/>
            <person name="Miskei M."/>
            <person name="Mos M."/>
            <person name="Mullins J."/>
            <person name="Nelson D.R."/>
            <person name="Nielsen J."/>
            <person name="Oakley B.R."/>
            <person name="Osmani S.A."/>
            <person name="Pakula T."/>
            <person name="Paszewski A."/>
            <person name="Paulsen I."/>
            <person name="Pilsyk S."/>
            <person name="Pocsi I."/>
            <person name="Punt P.J."/>
            <person name="Ram A.F."/>
            <person name="Ren Q."/>
            <person name="Robellet X."/>
            <person name="Robson G."/>
            <person name="Seiboth B."/>
            <person name="van Solingen P."/>
            <person name="Specht T."/>
            <person name="Sun J."/>
            <person name="Taheri-Talesh N."/>
            <person name="Takeshita N."/>
            <person name="Ussery D."/>
            <person name="vanKuyk P.A."/>
            <person name="Visser H."/>
            <person name="van de Vondervoort P.J."/>
            <person name="de Vries R.P."/>
            <person name="Walton J."/>
            <person name="Xiang X."/>
            <person name="Xiong Y."/>
            <person name="Zeng A.P."/>
            <person name="Brandt B.W."/>
            <person name="Cornell M.J."/>
            <person name="van den Hondel C.A."/>
            <person name="Visser J."/>
            <person name="Oliver S.G."/>
            <person name="Turner G."/>
        </authorList>
    </citation>
    <scope>GENOME REANNOTATION</scope>
    <source>
        <strain>FGSC A4 / ATCC 38163 / CBS 112.46 / NRRL 194 / M139</strain>
    </source>
</reference>
<reference key="3">
    <citation type="journal article" date="2015" name="Nat. Commun.">
        <title>Structure and boosting activity of a starch-degrading lytic polysaccharide monooxygenase.</title>
        <authorList>
            <person name="Lo Leggio L."/>
            <person name="Simmons T.J."/>
            <person name="Poulsen J.C."/>
            <person name="Frandsen K.E."/>
            <person name="Hemsworth G.R."/>
            <person name="Stringer M.A."/>
            <person name="von Freiesleben P."/>
            <person name="Tovborg M."/>
            <person name="Johansen K.S."/>
            <person name="De Maria L."/>
            <person name="Harris P.V."/>
            <person name="Soong C.L."/>
            <person name="Dupree P."/>
            <person name="Tryfona T."/>
            <person name="Lenfant N."/>
            <person name="Henrissat B."/>
            <person name="Davies G.J."/>
            <person name="Walton P.H."/>
        </authorList>
    </citation>
    <scope>FUNCTION</scope>
    <scope>CATALYTIC ACTIVITY</scope>
    <scope>SUBCELLULAR LOCATION</scope>
</reference>
<reference key="4">
    <citation type="journal article" date="2020" name="Biotechnol. Biofuels">
        <title>Loss of AA13 LPMOs impairs degradation of resistant starch and reduces the growth of Aspergillus nidulans.</title>
        <authorList>
            <person name="Haddad Momeni M."/>
            <person name="Leth M.L."/>
            <person name="Sternberg C."/>
            <person name="Schoof E."/>
            <person name="Nielsen M.W."/>
            <person name="Holck J."/>
            <person name="Workman C.T."/>
            <person name="Hoof J.B."/>
            <person name="Abou Hachem M."/>
        </authorList>
    </citation>
    <scope>FUNCTION</scope>
    <scope>DOMAIN</scope>
    <scope>DISRUPTION PHENOTYPE</scope>
</reference>
<reference key="5">
    <citation type="journal article" date="2023" name="Nat. Commun.">
        <title>A seven-transmembrane methyltransferase catalysing N-terminal histidine methylation of lytic polysaccharide monooxygenases.</title>
        <authorList>
            <person name="Batth T.S."/>
            <person name="Simonsen J.L."/>
            <person name="Hernandez-Rollan C."/>
            <person name="Brander S."/>
            <person name="Morth J.P."/>
            <person name="Johansen K.S."/>
            <person name="Noerholm M.H.H."/>
            <person name="Hoof J.B."/>
            <person name="Olsen J.V."/>
        </authorList>
    </citation>
    <scope>IDENTIFICATION BY MASS SPECTROMETRY</scope>
    <scope>METHYLATION AT HIS-19</scope>
</reference>
<protein>
    <recommendedName>
        <fullName evidence="10">AA13 family lytic polysaccharide monooxygenase aasA</fullName>
        <shortName evidence="10">LPMO13 aasA</shortName>
        <ecNumber evidence="7">1.14.99.55</ecNumber>
    </recommendedName>
</protein>
<dbReference type="EC" id="1.14.99.55" evidence="7"/>
<dbReference type="EMBL" id="BN001305">
    <property type="protein sequence ID" value="CBF81866.1"/>
    <property type="molecule type" value="Genomic_DNA"/>
</dbReference>
<dbReference type="RefSeq" id="XP_663067.1">
    <property type="nucleotide sequence ID" value="XM_657975.1"/>
</dbReference>
<dbReference type="SMR" id="Q5B1W7"/>
<dbReference type="STRING" id="227321.Q5B1W7"/>
<dbReference type="CAZy" id="AA13">
    <property type="family name" value="Auxiliary Activities 13"/>
</dbReference>
<dbReference type="CAZy" id="CBM20">
    <property type="family name" value="Carbohydrate-Binding Module Family 20"/>
</dbReference>
<dbReference type="EnsemblFungi" id="CBF81866">
    <property type="protein sequence ID" value="CBF81866"/>
    <property type="gene ID" value="ANIA_05463"/>
</dbReference>
<dbReference type="GeneID" id="2871754"/>
<dbReference type="KEGG" id="ani:ANIA_05463"/>
<dbReference type="VEuPathDB" id="FungiDB:AN5463"/>
<dbReference type="eggNOG" id="ENOG502QSJT">
    <property type="taxonomic scope" value="Eukaryota"/>
</dbReference>
<dbReference type="HOGENOM" id="CLU_055681_0_0_1"/>
<dbReference type="InParanoid" id="Q5B1W7"/>
<dbReference type="OMA" id="QACYRND"/>
<dbReference type="OrthoDB" id="550577at2759"/>
<dbReference type="BRENDA" id="1.14.99.55">
    <property type="organism ID" value="517"/>
</dbReference>
<dbReference type="Proteomes" id="UP000000560">
    <property type="component" value="Chromosome V"/>
</dbReference>
<dbReference type="GO" id="GO:0005576">
    <property type="term" value="C:extracellular region"/>
    <property type="evidence" value="ECO:0007669"/>
    <property type="project" value="UniProtKB-SubCell"/>
</dbReference>
<dbReference type="GO" id="GO:0016020">
    <property type="term" value="C:membrane"/>
    <property type="evidence" value="ECO:0000318"/>
    <property type="project" value="GO_Central"/>
</dbReference>
<dbReference type="GO" id="GO:0046872">
    <property type="term" value="F:metal ion binding"/>
    <property type="evidence" value="ECO:0007669"/>
    <property type="project" value="UniProtKB-KW"/>
</dbReference>
<dbReference type="GO" id="GO:0016491">
    <property type="term" value="F:oxidoreductase activity"/>
    <property type="evidence" value="ECO:0007669"/>
    <property type="project" value="UniProtKB-KW"/>
</dbReference>
<dbReference type="GO" id="GO:2001070">
    <property type="term" value="F:starch binding"/>
    <property type="evidence" value="ECO:0007669"/>
    <property type="project" value="InterPro"/>
</dbReference>
<dbReference type="GO" id="GO:0000272">
    <property type="term" value="P:polysaccharide catabolic process"/>
    <property type="evidence" value="ECO:0007669"/>
    <property type="project" value="UniProtKB-KW"/>
</dbReference>
<dbReference type="CDD" id="cd05811">
    <property type="entry name" value="CBM20_glucoamylase"/>
    <property type="match status" value="1"/>
</dbReference>
<dbReference type="FunFam" id="2.60.40.10:FF:000552">
    <property type="entry name" value="Related to glucoamylase"/>
    <property type="match status" value="1"/>
</dbReference>
<dbReference type="Gene3D" id="2.70.50.70">
    <property type="match status" value="1"/>
</dbReference>
<dbReference type="Gene3D" id="2.60.40.10">
    <property type="entry name" value="Immunoglobulins"/>
    <property type="match status" value="1"/>
</dbReference>
<dbReference type="InterPro" id="IPR013784">
    <property type="entry name" value="Carb-bd-like_fold"/>
</dbReference>
<dbReference type="InterPro" id="IPR002044">
    <property type="entry name" value="CBM20"/>
</dbReference>
<dbReference type="InterPro" id="IPR034836">
    <property type="entry name" value="CBM20_glucoamylase"/>
</dbReference>
<dbReference type="InterPro" id="IPR004302">
    <property type="entry name" value="Cellulose/chitin-bd_N"/>
</dbReference>
<dbReference type="InterPro" id="IPR013783">
    <property type="entry name" value="Ig-like_fold"/>
</dbReference>
<dbReference type="InterPro" id="IPR052282">
    <property type="entry name" value="Starch-active_LPMO"/>
</dbReference>
<dbReference type="PANTHER" id="PTHR36575">
    <property type="entry name" value="BINDING PROTEIN, PUTATIVE (AFU_ORTHOLOGUE AFUA_1G14430)-RELATED"/>
    <property type="match status" value="1"/>
</dbReference>
<dbReference type="PANTHER" id="PTHR36575:SF2">
    <property type="entry name" value="CHITIN-BINDING TYPE-4 DOMAIN-CONTAINING PROTEIN-RELATED"/>
    <property type="match status" value="1"/>
</dbReference>
<dbReference type="Pfam" id="PF00686">
    <property type="entry name" value="CBM_20"/>
    <property type="match status" value="1"/>
</dbReference>
<dbReference type="Pfam" id="PF03067">
    <property type="entry name" value="LPMO_10"/>
    <property type="match status" value="1"/>
</dbReference>
<dbReference type="SMART" id="SM01065">
    <property type="entry name" value="CBM_2"/>
    <property type="match status" value="1"/>
</dbReference>
<dbReference type="SUPFAM" id="SSF49452">
    <property type="entry name" value="Starch-binding domain-like"/>
    <property type="match status" value="1"/>
</dbReference>
<dbReference type="PROSITE" id="PS51166">
    <property type="entry name" value="CBM20"/>
    <property type="match status" value="1"/>
</dbReference>